<proteinExistence type="inferred from homology"/>
<keyword id="KW-1185">Reference proteome</keyword>
<keyword id="KW-0732">Signal</keyword>
<protein>
    <recommendedName>
        <fullName>Uncharacterized protein HI_1215</fullName>
    </recommendedName>
</protein>
<accession>P44128</accession>
<organism>
    <name type="scientific">Haemophilus influenzae (strain ATCC 51907 / DSM 11121 / KW20 / Rd)</name>
    <dbReference type="NCBI Taxonomy" id="71421"/>
    <lineage>
        <taxon>Bacteria</taxon>
        <taxon>Pseudomonadati</taxon>
        <taxon>Pseudomonadota</taxon>
        <taxon>Gammaproteobacteria</taxon>
        <taxon>Pasteurellales</taxon>
        <taxon>Pasteurellaceae</taxon>
        <taxon>Haemophilus</taxon>
    </lineage>
</organism>
<feature type="signal peptide" evidence="1">
    <location>
        <begin position="1"/>
        <end position="24"/>
    </location>
</feature>
<feature type="chain" id="PRO_0000013966" description="Uncharacterized protein HI_1215">
    <location>
        <begin position="25"/>
        <end position="235"/>
    </location>
</feature>
<name>Y1215_HAEIN</name>
<gene>
    <name type="ordered locus">HI_1215</name>
</gene>
<sequence length="235" mass="27235">MSDRMKLKGLLAFCLLFLSSFVLAEVNQKEFSVQNSPHLPSRDTIYFEDGRDYFSYKEPIEQASRTDKKIRIQFFFDYDCRVCSSAQDILELYSQIRTYKVALEQYPIATADNQFSARIFYTLQALSAGELSNVLLFETSEKSRYTELSTSNKIQQWAEEQGLDKQLFIQTENSQSVKEQIQNAIELTEEYGVFTYPYVVIGGKYVLTASTLYNDDYSVAVLDFLVNKIEQEQKQ</sequence>
<dbReference type="EMBL" id="L42023">
    <property type="protein sequence ID" value="AAC22868.1"/>
    <property type="molecule type" value="Genomic_DNA"/>
</dbReference>
<dbReference type="PIR" id="B64022">
    <property type="entry name" value="B64022"/>
</dbReference>
<dbReference type="RefSeq" id="NP_439371.2">
    <property type="nucleotide sequence ID" value="NC_000907.1"/>
</dbReference>
<dbReference type="SMR" id="P44128"/>
<dbReference type="STRING" id="71421.HI_1215"/>
<dbReference type="EnsemblBacteria" id="AAC22868">
    <property type="protein sequence ID" value="AAC22868"/>
    <property type="gene ID" value="HI_1215"/>
</dbReference>
<dbReference type="KEGG" id="hin:HI_1215"/>
<dbReference type="PATRIC" id="fig|71421.8.peg.1267"/>
<dbReference type="eggNOG" id="COG1651">
    <property type="taxonomic scope" value="Bacteria"/>
</dbReference>
<dbReference type="HOGENOM" id="CLU_088255_1_0_6"/>
<dbReference type="OrthoDB" id="9784896at2"/>
<dbReference type="PhylomeDB" id="P44128"/>
<dbReference type="Proteomes" id="UP000000579">
    <property type="component" value="Chromosome"/>
</dbReference>
<dbReference type="GO" id="GO:0030288">
    <property type="term" value="C:outer membrane-bounded periplasmic space"/>
    <property type="evidence" value="ECO:0000318"/>
    <property type="project" value="GO_Central"/>
</dbReference>
<dbReference type="GO" id="GO:0003756">
    <property type="term" value="F:protein disulfide isomerase activity"/>
    <property type="evidence" value="ECO:0000318"/>
    <property type="project" value="GO_Central"/>
</dbReference>
<dbReference type="GO" id="GO:0015035">
    <property type="term" value="F:protein-disulfide reductase activity"/>
    <property type="evidence" value="ECO:0000318"/>
    <property type="project" value="GO_Central"/>
</dbReference>
<dbReference type="GO" id="GO:0071236">
    <property type="term" value="P:cellular response to antibiotic"/>
    <property type="evidence" value="ECO:0000318"/>
    <property type="project" value="GO_Central"/>
</dbReference>
<dbReference type="CDD" id="cd03019">
    <property type="entry name" value="DsbA_DsbA"/>
    <property type="match status" value="1"/>
</dbReference>
<dbReference type="Gene3D" id="3.40.30.10">
    <property type="entry name" value="Glutaredoxin"/>
    <property type="match status" value="1"/>
</dbReference>
<dbReference type="InterPro" id="IPR023205">
    <property type="entry name" value="DsbA/DsbL"/>
</dbReference>
<dbReference type="InterPro" id="IPR050824">
    <property type="entry name" value="Thiol_disulfide_DsbA"/>
</dbReference>
<dbReference type="InterPro" id="IPR036249">
    <property type="entry name" value="Thioredoxin-like_sf"/>
</dbReference>
<dbReference type="PANTHER" id="PTHR35891">
    <property type="entry name" value="THIOL:DISULFIDE INTERCHANGE PROTEIN DSBA"/>
    <property type="match status" value="1"/>
</dbReference>
<dbReference type="PANTHER" id="PTHR35891:SF2">
    <property type="entry name" value="THIOL:DISULFIDE INTERCHANGE PROTEIN DSBA"/>
    <property type="match status" value="1"/>
</dbReference>
<dbReference type="SUPFAM" id="SSF52833">
    <property type="entry name" value="Thioredoxin-like"/>
    <property type="match status" value="1"/>
</dbReference>
<evidence type="ECO:0000255" key="1"/>
<reference key="1">
    <citation type="journal article" date="1995" name="Science">
        <title>Whole-genome random sequencing and assembly of Haemophilus influenzae Rd.</title>
        <authorList>
            <person name="Fleischmann R.D."/>
            <person name="Adams M.D."/>
            <person name="White O."/>
            <person name="Clayton R.A."/>
            <person name="Kirkness E.F."/>
            <person name="Kerlavage A.R."/>
            <person name="Bult C.J."/>
            <person name="Tomb J.-F."/>
            <person name="Dougherty B.A."/>
            <person name="Merrick J.M."/>
            <person name="McKenney K."/>
            <person name="Sutton G.G."/>
            <person name="FitzHugh W."/>
            <person name="Fields C.A."/>
            <person name="Gocayne J.D."/>
            <person name="Scott J.D."/>
            <person name="Shirley R."/>
            <person name="Liu L.-I."/>
            <person name="Glodek A."/>
            <person name="Kelley J.M."/>
            <person name="Weidman J.F."/>
            <person name="Phillips C.A."/>
            <person name="Spriggs T."/>
            <person name="Hedblom E."/>
            <person name="Cotton M.D."/>
            <person name="Utterback T.R."/>
            <person name="Hanna M.C."/>
            <person name="Nguyen D.T."/>
            <person name="Saudek D.M."/>
            <person name="Brandon R.C."/>
            <person name="Fine L.D."/>
            <person name="Fritchman J.L."/>
            <person name="Fuhrmann J.L."/>
            <person name="Geoghagen N.S.M."/>
            <person name="Gnehm C.L."/>
            <person name="McDonald L.A."/>
            <person name="Small K.V."/>
            <person name="Fraser C.M."/>
            <person name="Smith H.O."/>
            <person name="Venter J.C."/>
        </authorList>
    </citation>
    <scope>NUCLEOTIDE SEQUENCE [LARGE SCALE GENOMIC DNA]</scope>
    <source>
        <strain>ATCC 51907 / DSM 11121 / KW20 / Rd</strain>
    </source>
</reference>